<gene>
    <name evidence="1" type="primary">rpsO</name>
    <name type="ordered locus">YPDSF_3542</name>
</gene>
<accession>A4TRI0</accession>
<evidence type="ECO:0000255" key="1">
    <source>
        <dbReference type="HAMAP-Rule" id="MF_01343"/>
    </source>
</evidence>
<evidence type="ECO:0000305" key="2"/>
<organism>
    <name type="scientific">Yersinia pestis (strain Pestoides F)</name>
    <dbReference type="NCBI Taxonomy" id="386656"/>
    <lineage>
        <taxon>Bacteria</taxon>
        <taxon>Pseudomonadati</taxon>
        <taxon>Pseudomonadota</taxon>
        <taxon>Gammaproteobacteria</taxon>
        <taxon>Enterobacterales</taxon>
        <taxon>Yersiniaceae</taxon>
        <taxon>Yersinia</taxon>
    </lineage>
</organism>
<dbReference type="EMBL" id="CP000668">
    <property type="protein sequence ID" value="ABP41892.1"/>
    <property type="molecule type" value="Genomic_DNA"/>
</dbReference>
<dbReference type="RefSeq" id="WP_002209257.1">
    <property type="nucleotide sequence ID" value="NZ_CP009715.1"/>
</dbReference>
<dbReference type="SMR" id="A4TRI0"/>
<dbReference type="GeneID" id="96663990"/>
<dbReference type="KEGG" id="ypp:YPDSF_3542"/>
<dbReference type="PATRIC" id="fig|386656.14.peg.198"/>
<dbReference type="GO" id="GO:0022627">
    <property type="term" value="C:cytosolic small ribosomal subunit"/>
    <property type="evidence" value="ECO:0007669"/>
    <property type="project" value="TreeGrafter"/>
</dbReference>
<dbReference type="GO" id="GO:0019843">
    <property type="term" value="F:rRNA binding"/>
    <property type="evidence" value="ECO:0007669"/>
    <property type="project" value="UniProtKB-UniRule"/>
</dbReference>
<dbReference type="GO" id="GO:0003735">
    <property type="term" value="F:structural constituent of ribosome"/>
    <property type="evidence" value="ECO:0007669"/>
    <property type="project" value="InterPro"/>
</dbReference>
<dbReference type="GO" id="GO:0006412">
    <property type="term" value="P:translation"/>
    <property type="evidence" value="ECO:0007669"/>
    <property type="project" value="UniProtKB-UniRule"/>
</dbReference>
<dbReference type="CDD" id="cd00353">
    <property type="entry name" value="Ribosomal_S15p_S13e"/>
    <property type="match status" value="1"/>
</dbReference>
<dbReference type="FunFam" id="1.10.287.10:FF:000002">
    <property type="entry name" value="30S ribosomal protein S15"/>
    <property type="match status" value="1"/>
</dbReference>
<dbReference type="Gene3D" id="6.10.250.3130">
    <property type="match status" value="1"/>
</dbReference>
<dbReference type="Gene3D" id="1.10.287.10">
    <property type="entry name" value="S15/NS1, RNA-binding"/>
    <property type="match status" value="1"/>
</dbReference>
<dbReference type="HAMAP" id="MF_01343_B">
    <property type="entry name" value="Ribosomal_uS15_B"/>
    <property type="match status" value="1"/>
</dbReference>
<dbReference type="InterPro" id="IPR000589">
    <property type="entry name" value="Ribosomal_uS15"/>
</dbReference>
<dbReference type="InterPro" id="IPR005290">
    <property type="entry name" value="Ribosomal_uS15_bac-type"/>
</dbReference>
<dbReference type="InterPro" id="IPR009068">
    <property type="entry name" value="uS15_NS1_RNA-bd_sf"/>
</dbReference>
<dbReference type="NCBIfam" id="TIGR00952">
    <property type="entry name" value="S15_bact"/>
    <property type="match status" value="1"/>
</dbReference>
<dbReference type="PANTHER" id="PTHR23321">
    <property type="entry name" value="RIBOSOMAL PROTEIN S15, BACTERIAL AND ORGANELLAR"/>
    <property type="match status" value="1"/>
</dbReference>
<dbReference type="PANTHER" id="PTHR23321:SF26">
    <property type="entry name" value="SMALL RIBOSOMAL SUBUNIT PROTEIN US15M"/>
    <property type="match status" value="1"/>
</dbReference>
<dbReference type="Pfam" id="PF00312">
    <property type="entry name" value="Ribosomal_S15"/>
    <property type="match status" value="1"/>
</dbReference>
<dbReference type="SMART" id="SM01387">
    <property type="entry name" value="Ribosomal_S15"/>
    <property type="match status" value="1"/>
</dbReference>
<dbReference type="SUPFAM" id="SSF47060">
    <property type="entry name" value="S15/NS1 RNA-binding domain"/>
    <property type="match status" value="1"/>
</dbReference>
<dbReference type="PROSITE" id="PS00362">
    <property type="entry name" value="RIBOSOMAL_S15"/>
    <property type="match status" value="1"/>
</dbReference>
<proteinExistence type="inferred from homology"/>
<feature type="chain" id="PRO_1000054896" description="Small ribosomal subunit protein uS15">
    <location>
        <begin position="1"/>
        <end position="89"/>
    </location>
</feature>
<name>RS15_YERPP</name>
<comment type="function">
    <text evidence="1">One of the primary rRNA binding proteins, it binds directly to 16S rRNA where it helps nucleate assembly of the platform of the 30S subunit by binding and bridging several RNA helices of the 16S rRNA.</text>
</comment>
<comment type="function">
    <text evidence="1">Forms an intersubunit bridge (bridge B4) with the 23S rRNA of the 50S subunit in the ribosome.</text>
</comment>
<comment type="subunit">
    <text evidence="1">Part of the 30S ribosomal subunit. Forms a bridge to the 50S subunit in the 70S ribosome, contacting the 23S rRNA.</text>
</comment>
<comment type="similarity">
    <text evidence="1">Belongs to the universal ribosomal protein uS15 family.</text>
</comment>
<sequence length="89" mass="10140">MSLSVEAKAKIVADFGRGTNDTGSSEVQVALLTAQINHLQGHFSEHKKDHHSRRGLLRMVSTRRKLLDYLKRQDVARYASLIERLGLRR</sequence>
<keyword id="KW-0687">Ribonucleoprotein</keyword>
<keyword id="KW-0689">Ribosomal protein</keyword>
<keyword id="KW-0694">RNA-binding</keyword>
<keyword id="KW-0699">rRNA-binding</keyword>
<reference key="1">
    <citation type="submission" date="2007-02" db="EMBL/GenBank/DDBJ databases">
        <title>Complete sequence of chromosome of Yersinia pestis Pestoides F.</title>
        <authorList>
            <consortium name="US DOE Joint Genome Institute"/>
            <person name="Copeland A."/>
            <person name="Lucas S."/>
            <person name="Lapidus A."/>
            <person name="Barry K."/>
            <person name="Detter J.C."/>
            <person name="Glavina del Rio T."/>
            <person name="Hammon N."/>
            <person name="Israni S."/>
            <person name="Dalin E."/>
            <person name="Tice H."/>
            <person name="Pitluck S."/>
            <person name="Di Bartolo G."/>
            <person name="Chain P."/>
            <person name="Malfatti S."/>
            <person name="Shin M."/>
            <person name="Vergez L."/>
            <person name="Schmutz J."/>
            <person name="Larimer F."/>
            <person name="Land M."/>
            <person name="Hauser L."/>
            <person name="Worsham P."/>
            <person name="Chu M."/>
            <person name="Bearden S."/>
            <person name="Garcia E."/>
            <person name="Richardson P."/>
        </authorList>
    </citation>
    <scope>NUCLEOTIDE SEQUENCE [LARGE SCALE GENOMIC DNA]</scope>
    <source>
        <strain>Pestoides F</strain>
    </source>
</reference>
<protein>
    <recommendedName>
        <fullName evidence="1">Small ribosomal subunit protein uS15</fullName>
    </recommendedName>
    <alternativeName>
        <fullName evidence="2">30S ribosomal protein S15</fullName>
    </alternativeName>
</protein>